<keyword id="KW-0030">Aminoacyl-tRNA synthetase</keyword>
<keyword id="KW-0067">ATP-binding</keyword>
<keyword id="KW-0963">Cytoplasm</keyword>
<keyword id="KW-0436">Ligase</keyword>
<keyword id="KW-0479">Metal-binding</keyword>
<keyword id="KW-0547">Nucleotide-binding</keyword>
<keyword id="KW-0648">Protein biosynthesis</keyword>
<keyword id="KW-0862">Zinc</keyword>
<gene>
    <name evidence="1" type="primary">ileS</name>
    <name type="ordered locus">HPSH_07255</name>
</gene>
<protein>
    <recommendedName>
        <fullName evidence="1">Isoleucine--tRNA ligase</fullName>
        <ecNumber evidence="1">6.1.1.5</ecNumber>
    </recommendedName>
    <alternativeName>
        <fullName evidence="1">Isoleucyl-tRNA synthetase</fullName>
        <shortName evidence="1">IleRS</shortName>
    </alternativeName>
</protein>
<sequence>MKEYKDTLNLNATTFSMKGNLSVNEPKTYAKWQEQQAFKRMQARKDNHGDFTLHDGPPYANGHLHLGHALNKILKDIVVKREYFKGKKIYYTPGWDCHGLPIEQQILEQLEKEKTSLENPTLFREKCRDHAKKFLEIQKNEFLQLGVLGDFDDPYKTMDFKFEASIYRALVEVAKKGLLKERHKPIYWSYACESALAEAEVEYKMKKSPSIFVAFGLKKESLEKLKVKKASLVIWTTTPWTLYANVAIALKKDAIYALTQKGYLVAKALHEKLAALGVVDSEIVHEFNANDLEYLKALNPLNQRNSLITLGEHVGLEDGTGAVHTAPGHGEEDYYLGLKYNLEVLMSVDEKGCYDEGIIHNQLLDESYLGEHVFKAQKRIIEQLGDSLLLEQEIEHSYPHCWRTHKPVIYRATTQWFILMDEPFIQNDGSQKTLREVALDAIEKVEFVPNSGKNRLKIMIENRPDWCLSRQRKWGVPLAFFIDKRTNKPCFESEVLEHTAKLFEERGCDVWWEYSVKDLLPPNYQDNATYYEKVMHILDVWFDSGSTFKAVLEDYQGEKGQSPSDVVLEGSDQHRGWFQSSLLIGCILNNQAPFKKVITHGFIVDEKGEKMSKSKGNVVSLDKLLKTHGSDVVRLWVAFNDYQNDLRVSQTFFTQTEQHYKKFRNTLKFLLANFSDMDLKNLERSHNFSPLDHFILESLETISAGVNSAFEEHDFVKGLNVLMAFVTNELSGIYLDACKDSLYCDSKNNEKRQAIQMVLLATASKLCYFLAPILTHTIEEVLAHSQVLRIFLQAKDVFDLKDISVSEKLHLKEFKKPENFEAVLALRSAFNEELDRLKKEGVIKNSLECAIEVGEKALCENLVEELLMVSFVGIAREKLSETPAFTLFKAPFYKCPRCWRFKSELENAPCKRCEQVLKER</sequence>
<proteinExistence type="inferred from homology"/>
<feature type="chain" id="PRO_1000189172" description="Isoleucine--tRNA ligase">
    <location>
        <begin position="1"/>
        <end position="920"/>
    </location>
</feature>
<feature type="short sequence motif" description="'HIGH' region">
    <location>
        <begin position="58"/>
        <end position="68"/>
    </location>
</feature>
<feature type="short sequence motif" description="'KMSKS' region">
    <location>
        <begin position="610"/>
        <end position="614"/>
    </location>
</feature>
<feature type="binding site" evidence="1">
    <location>
        <position position="569"/>
    </location>
    <ligand>
        <name>L-isoleucyl-5'-AMP</name>
        <dbReference type="ChEBI" id="CHEBI:178002"/>
    </ligand>
</feature>
<feature type="binding site" evidence="1">
    <location>
        <position position="613"/>
    </location>
    <ligand>
        <name>ATP</name>
        <dbReference type="ChEBI" id="CHEBI:30616"/>
    </ligand>
</feature>
<feature type="binding site" evidence="1">
    <location>
        <position position="895"/>
    </location>
    <ligand>
        <name>Zn(2+)</name>
        <dbReference type="ChEBI" id="CHEBI:29105"/>
    </ligand>
</feature>
<feature type="binding site" evidence="1">
    <location>
        <position position="898"/>
    </location>
    <ligand>
        <name>Zn(2+)</name>
        <dbReference type="ChEBI" id="CHEBI:29105"/>
    </ligand>
</feature>
<feature type="binding site" evidence="1">
    <location>
        <position position="910"/>
    </location>
    <ligand>
        <name>Zn(2+)</name>
        <dbReference type="ChEBI" id="CHEBI:29105"/>
    </ligand>
</feature>
<feature type="binding site" evidence="1">
    <location>
        <position position="913"/>
    </location>
    <ligand>
        <name>Zn(2+)</name>
        <dbReference type="ChEBI" id="CHEBI:29105"/>
    </ligand>
</feature>
<name>SYI_HELPS</name>
<comment type="function">
    <text evidence="1">Catalyzes the attachment of isoleucine to tRNA(Ile). As IleRS can inadvertently accommodate and process structurally similar amino acids such as valine, to avoid such errors it has two additional distinct tRNA(Ile)-dependent editing activities. One activity is designated as 'pretransfer' editing and involves the hydrolysis of activated Val-AMP. The other activity is designated 'posttransfer' editing and involves deacylation of mischarged Val-tRNA(Ile).</text>
</comment>
<comment type="catalytic activity">
    <reaction evidence="1">
        <text>tRNA(Ile) + L-isoleucine + ATP = L-isoleucyl-tRNA(Ile) + AMP + diphosphate</text>
        <dbReference type="Rhea" id="RHEA:11060"/>
        <dbReference type="Rhea" id="RHEA-COMP:9666"/>
        <dbReference type="Rhea" id="RHEA-COMP:9695"/>
        <dbReference type="ChEBI" id="CHEBI:30616"/>
        <dbReference type="ChEBI" id="CHEBI:33019"/>
        <dbReference type="ChEBI" id="CHEBI:58045"/>
        <dbReference type="ChEBI" id="CHEBI:78442"/>
        <dbReference type="ChEBI" id="CHEBI:78528"/>
        <dbReference type="ChEBI" id="CHEBI:456215"/>
        <dbReference type="EC" id="6.1.1.5"/>
    </reaction>
</comment>
<comment type="cofactor">
    <cofactor evidence="1">
        <name>Zn(2+)</name>
        <dbReference type="ChEBI" id="CHEBI:29105"/>
    </cofactor>
    <text evidence="1">Binds 1 zinc ion per subunit.</text>
</comment>
<comment type="subunit">
    <text evidence="1">Monomer.</text>
</comment>
<comment type="subcellular location">
    <subcellularLocation>
        <location evidence="1">Cytoplasm</location>
    </subcellularLocation>
</comment>
<comment type="domain">
    <text evidence="1">IleRS has two distinct active sites: one for aminoacylation and one for editing. The misactivated valine is translocated from the active site to the editing site, which sterically excludes the correctly activated isoleucine. The single editing site contains two valyl binding pockets, one specific for each substrate (Val-AMP or Val-tRNA(Ile)).</text>
</comment>
<comment type="similarity">
    <text evidence="1">Belongs to the class-I aminoacyl-tRNA synthetase family. IleS type 1 subfamily.</text>
</comment>
<reference key="1">
    <citation type="submission" date="2008-05" db="EMBL/GenBank/DDBJ databases">
        <title>Genome sequence of Helicobacter pylori from the remote Amazon: traces of Asian ancestry of the first Americans.</title>
        <authorList>
            <person name="Kersulyte D."/>
            <person name="Kalia A."/>
            <person name="Gilman R.H."/>
            <person name="Berg D.E."/>
        </authorList>
    </citation>
    <scope>NUCLEOTIDE SEQUENCE [LARGE SCALE GENOMIC DNA]</scope>
    <source>
        <strain>Shi470</strain>
    </source>
</reference>
<evidence type="ECO:0000255" key="1">
    <source>
        <dbReference type="HAMAP-Rule" id="MF_02002"/>
    </source>
</evidence>
<dbReference type="EC" id="6.1.1.5" evidence="1"/>
<dbReference type="EMBL" id="CP001072">
    <property type="protein sequence ID" value="ACD48844.1"/>
    <property type="molecule type" value="Genomic_DNA"/>
</dbReference>
<dbReference type="RefSeq" id="WP_000666192.1">
    <property type="nucleotide sequence ID" value="NC_010698.2"/>
</dbReference>
<dbReference type="SMR" id="B2UVG2"/>
<dbReference type="KEGG" id="hps:HPSH_07255"/>
<dbReference type="HOGENOM" id="CLU_001493_7_0_7"/>
<dbReference type="GO" id="GO:0005829">
    <property type="term" value="C:cytosol"/>
    <property type="evidence" value="ECO:0007669"/>
    <property type="project" value="TreeGrafter"/>
</dbReference>
<dbReference type="GO" id="GO:0002161">
    <property type="term" value="F:aminoacyl-tRNA deacylase activity"/>
    <property type="evidence" value="ECO:0007669"/>
    <property type="project" value="InterPro"/>
</dbReference>
<dbReference type="GO" id="GO:0005524">
    <property type="term" value="F:ATP binding"/>
    <property type="evidence" value="ECO:0007669"/>
    <property type="project" value="UniProtKB-UniRule"/>
</dbReference>
<dbReference type="GO" id="GO:0004822">
    <property type="term" value="F:isoleucine-tRNA ligase activity"/>
    <property type="evidence" value="ECO:0007669"/>
    <property type="project" value="UniProtKB-UniRule"/>
</dbReference>
<dbReference type="GO" id="GO:0000049">
    <property type="term" value="F:tRNA binding"/>
    <property type="evidence" value="ECO:0007669"/>
    <property type="project" value="InterPro"/>
</dbReference>
<dbReference type="GO" id="GO:0008270">
    <property type="term" value="F:zinc ion binding"/>
    <property type="evidence" value="ECO:0007669"/>
    <property type="project" value="UniProtKB-UniRule"/>
</dbReference>
<dbReference type="GO" id="GO:0006428">
    <property type="term" value="P:isoleucyl-tRNA aminoacylation"/>
    <property type="evidence" value="ECO:0007669"/>
    <property type="project" value="UniProtKB-UniRule"/>
</dbReference>
<dbReference type="CDD" id="cd07960">
    <property type="entry name" value="Anticodon_Ia_Ile_BEm"/>
    <property type="match status" value="1"/>
</dbReference>
<dbReference type="CDD" id="cd00818">
    <property type="entry name" value="IleRS_core"/>
    <property type="match status" value="1"/>
</dbReference>
<dbReference type="FunFam" id="1.10.730.20:FF:000007">
    <property type="entry name" value="Isoleucine--tRNA ligase"/>
    <property type="match status" value="1"/>
</dbReference>
<dbReference type="FunFam" id="3.40.50.620:FF:000168">
    <property type="entry name" value="Isoleucine--tRNA ligase"/>
    <property type="match status" value="1"/>
</dbReference>
<dbReference type="Gene3D" id="1.10.730.20">
    <property type="match status" value="1"/>
</dbReference>
<dbReference type="Gene3D" id="3.40.50.620">
    <property type="entry name" value="HUPs"/>
    <property type="match status" value="2"/>
</dbReference>
<dbReference type="Gene3D" id="1.10.10.830">
    <property type="entry name" value="Ile-tRNA synthetase CP2 domain-like"/>
    <property type="match status" value="1"/>
</dbReference>
<dbReference type="HAMAP" id="MF_02002">
    <property type="entry name" value="Ile_tRNA_synth_type1"/>
    <property type="match status" value="1"/>
</dbReference>
<dbReference type="InterPro" id="IPR001412">
    <property type="entry name" value="aa-tRNA-synth_I_CS"/>
</dbReference>
<dbReference type="InterPro" id="IPR002300">
    <property type="entry name" value="aa-tRNA-synth_Ia"/>
</dbReference>
<dbReference type="InterPro" id="IPR033708">
    <property type="entry name" value="Anticodon_Ile_BEm"/>
</dbReference>
<dbReference type="InterPro" id="IPR002301">
    <property type="entry name" value="Ile-tRNA-ligase"/>
</dbReference>
<dbReference type="InterPro" id="IPR023585">
    <property type="entry name" value="Ile-tRNA-ligase_type1"/>
</dbReference>
<dbReference type="InterPro" id="IPR050081">
    <property type="entry name" value="Ile-tRNA_ligase"/>
</dbReference>
<dbReference type="InterPro" id="IPR013155">
    <property type="entry name" value="M/V/L/I-tRNA-synth_anticd-bd"/>
</dbReference>
<dbReference type="InterPro" id="IPR014729">
    <property type="entry name" value="Rossmann-like_a/b/a_fold"/>
</dbReference>
<dbReference type="InterPro" id="IPR009080">
    <property type="entry name" value="tRNAsynth_Ia_anticodon-bd"/>
</dbReference>
<dbReference type="InterPro" id="IPR009008">
    <property type="entry name" value="Val/Leu/Ile-tRNA-synth_edit"/>
</dbReference>
<dbReference type="NCBIfam" id="TIGR00392">
    <property type="entry name" value="ileS"/>
    <property type="match status" value="1"/>
</dbReference>
<dbReference type="PANTHER" id="PTHR42765:SF1">
    <property type="entry name" value="ISOLEUCINE--TRNA LIGASE, MITOCHONDRIAL"/>
    <property type="match status" value="1"/>
</dbReference>
<dbReference type="PANTHER" id="PTHR42765">
    <property type="entry name" value="SOLEUCYL-TRNA SYNTHETASE"/>
    <property type="match status" value="1"/>
</dbReference>
<dbReference type="Pfam" id="PF08264">
    <property type="entry name" value="Anticodon_1"/>
    <property type="match status" value="1"/>
</dbReference>
<dbReference type="Pfam" id="PF00133">
    <property type="entry name" value="tRNA-synt_1"/>
    <property type="match status" value="1"/>
</dbReference>
<dbReference type="PRINTS" id="PR00984">
    <property type="entry name" value="TRNASYNTHILE"/>
</dbReference>
<dbReference type="SUPFAM" id="SSF47323">
    <property type="entry name" value="Anticodon-binding domain of a subclass of class I aminoacyl-tRNA synthetases"/>
    <property type="match status" value="1"/>
</dbReference>
<dbReference type="SUPFAM" id="SSF52374">
    <property type="entry name" value="Nucleotidylyl transferase"/>
    <property type="match status" value="1"/>
</dbReference>
<dbReference type="SUPFAM" id="SSF50677">
    <property type="entry name" value="ValRS/IleRS/LeuRS editing domain"/>
    <property type="match status" value="1"/>
</dbReference>
<dbReference type="PROSITE" id="PS00178">
    <property type="entry name" value="AA_TRNA_LIGASE_I"/>
    <property type="match status" value="1"/>
</dbReference>
<organism>
    <name type="scientific">Helicobacter pylori (strain Shi470)</name>
    <dbReference type="NCBI Taxonomy" id="512562"/>
    <lineage>
        <taxon>Bacteria</taxon>
        <taxon>Pseudomonadati</taxon>
        <taxon>Campylobacterota</taxon>
        <taxon>Epsilonproteobacteria</taxon>
        <taxon>Campylobacterales</taxon>
        <taxon>Helicobacteraceae</taxon>
        <taxon>Helicobacter</taxon>
    </lineage>
</organism>
<accession>B2UVG2</accession>